<accession>P84452</accession>
<dbReference type="SMR" id="P84452"/>
<dbReference type="GO" id="GO:0005576">
    <property type="term" value="C:extracellular region"/>
    <property type="evidence" value="ECO:0007669"/>
    <property type="project" value="UniProtKB-SubCell"/>
</dbReference>
<dbReference type="GO" id="GO:0004867">
    <property type="term" value="F:serine-type endopeptidase inhibitor activity"/>
    <property type="evidence" value="ECO:0007669"/>
    <property type="project" value="UniProtKB-KW"/>
</dbReference>
<dbReference type="Gene3D" id="4.10.75.20">
    <property type="match status" value="1"/>
</dbReference>
<dbReference type="InterPro" id="IPR000737">
    <property type="entry name" value="Prot_inh_squash"/>
</dbReference>
<dbReference type="InterPro" id="IPR011052">
    <property type="entry name" value="Proteinase_amylase_inhib_sf"/>
</dbReference>
<dbReference type="Pfam" id="PF00299">
    <property type="entry name" value="Squash"/>
    <property type="match status" value="1"/>
</dbReference>
<dbReference type="SMART" id="SM00286">
    <property type="entry name" value="PTI"/>
    <property type="match status" value="1"/>
</dbReference>
<dbReference type="SUPFAM" id="SSF57027">
    <property type="entry name" value="Plant inhibitors of proteinases and amylases"/>
    <property type="match status" value="1"/>
</dbReference>
<dbReference type="PROSITE" id="PS00286">
    <property type="entry name" value="SQUASH_INHIBITOR"/>
    <property type="match status" value="1"/>
</dbReference>
<feature type="peptide" id="PRO_0000044392" description="Trypsin inhibitor 5">
    <location>
        <begin position="1"/>
        <end position="27"/>
    </location>
</feature>
<feature type="site" description="Reactive bond" evidence="4">
    <location>
        <begin position="3"/>
        <end position="4"/>
    </location>
</feature>
<feature type="disulfide bond" evidence="2">
    <location>
        <begin position="1"/>
        <end position="18"/>
    </location>
</feature>
<feature type="disulfide bond" evidence="2">
    <location>
        <begin position="8"/>
        <end position="20"/>
    </location>
</feature>
<feature type="disulfide bond" evidence="2">
    <location>
        <begin position="14"/>
        <end position="26"/>
    </location>
</feature>
<comment type="function">
    <text evidence="3">Inhibits trypsin.</text>
</comment>
<comment type="subcellular location">
    <subcellularLocation>
        <location>Secreted</location>
    </subcellularLocation>
</comment>
<comment type="domain">
    <text evidence="1">The presence of a 'disulfide through disulfide knot' structurally defines this protein as a knottin.</text>
</comment>
<comment type="mass spectrometry" mass="2990.5" error="0.1" method="MALDI" evidence="3"/>
<comment type="similarity">
    <text evidence="4">Belongs to the protease inhibitor I7 (squash-type serine protease inhibitor) family.</text>
</comment>
<organism>
    <name type="scientific">Sechium edule</name>
    <name type="common">Chayote</name>
    <name type="synonym">Sicyos edulis</name>
    <dbReference type="NCBI Taxonomy" id="184140"/>
    <lineage>
        <taxon>Eukaryota</taxon>
        <taxon>Viridiplantae</taxon>
        <taxon>Streptophyta</taxon>
        <taxon>Embryophyta</taxon>
        <taxon>Tracheophyta</taxon>
        <taxon>Spermatophyta</taxon>
        <taxon>Magnoliopsida</taxon>
        <taxon>eudicotyledons</taxon>
        <taxon>Gunneridae</taxon>
        <taxon>Pentapetalae</taxon>
        <taxon>rosids</taxon>
        <taxon>fabids</taxon>
        <taxon>Cucurbitales</taxon>
        <taxon>Cucurbitaceae</taxon>
        <taxon>Sicyoeae</taxon>
        <taxon>Sicyos</taxon>
    </lineage>
</organism>
<sequence length="27" mass="2997">CPRILMKCKLDTDCFPTCTCRPSGFCG</sequence>
<reference key="1">
    <citation type="journal article" date="2006" name="Phytochemistry">
        <title>Low molecular weight squash trypsin inhibitors from Sechium edule seeds.</title>
        <authorList>
            <person name="Laure H.J."/>
            <person name="Faca V.M."/>
            <person name="Lzumi C."/>
            <person name="Padovan J.C."/>
            <person name="Greene L.J."/>
        </authorList>
    </citation>
    <scope>PROTEIN SEQUENCE</scope>
    <scope>FUNCTION</scope>
    <scope>MASS SPECTROMETRY</scope>
    <source>
        <tissue>Seed</tissue>
    </source>
</reference>
<proteinExistence type="evidence at protein level"/>
<keyword id="KW-0903">Direct protein sequencing</keyword>
<keyword id="KW-1015">Disulfide bond</keyword>
<keyword id="KW-0960">Knottin</keyword>
<keyword id="KW-0646">Protease inhibitor</keyword>
<keyword id="KW-0964">Secreted</keyword>
<keyword id="KW-0722">Serine protease inhibitor</keyword>
<protein>
    <recommendedName>
        <fullName>Trypsin inhibitor 5</fullName>
    </recommendedName>
    <alternativeName>
        <fullName>SETI-V</fullName>
    </alternativeName>
    <alternativeName>
        <fullName>Trypsin inhibitor V</fullName>
    </alternativeName>
</protein>
<evidence type="ECO:0000250" key="1"/>
<evidence type="ECO:0000250" key="2">
    <source>
        <dbReference type="UniProtKB" id="P12071"/>
    </source>
</evidence>
<evidence type="ECO:0000269" key="3">
    <source>
    </source>
</evidence>
<evidence type="ECO:0000305" key="4"/>
<name>ITR5_SECED</name>